<sequence length="126" mass="14212">MARLVGVDLPREKRLEIALTYIFGVGRTRAKETLAATGVSPDLRVRDLSDDDLVALRDHIEGNYRVEGDLRREVAADIRRKVEIGTYQGLRHRRGLPVRGQRTKTNARTRKGPKRTVAGKKKAGRK</sequence>
<accession>A6W5W3</accession>
<keyword id="KW-1185">Reference proteome</keyword>
<keyword id="KW-0687">Ribonucleoprotein</keyword>
<keyword id="KW-0689">Ribosomal protein</keyword>
<keyword id="KW-0694">RNA-binding</keyword>
<keyword id="KW-0699">rRNA-binding</keyword>
<keyword id="KW-0820">tRNA-binding</keyword>
<organism>
    <name type="scientific">Kineococcus radiotolerans (strain ATCC BAA-149 / DSM 14245 / SRS30216)</name>
    <dbReference type="NCBI Taxonomy" id="266940"/>
    <lineage>
        <taxon>Bacteria</taxon>
        <taxon>Bacillati</taxon>
        <taxon>Actinomycetota</taxon>
        <taxon>Actinomycetes</taxon>
        <taxon>Kineosporiales</taxon>
        <taxon>Kineosporiaceae</taxon>
        <taxon>Kineococcus</taxon>
    </lineage>
</organism>
<protein>
    <recommendedName>
        <fullName evidence="1">Small ribosomal subunit protein uS13</fullName>
    </recommendedName>
    <alternativeName>
        <fullName evidence="3">30S ribosomal protein S13</fullName>
    </alternativeName>
</protein>
<comment type="function">
    <text evidence="1">Located at the top of the head of the 30S subunit, it contacts several helices of the 16S rRNA. In the 70S ribosome it contacts the 23S rRNA (bridge B1a) and protein L5 of the 50S subunit (bridge B1b), connecting the 2 subunits; these bridges are implicated in subunit movement. Contacts the tRNAs in the A and P-sites.</text>
</comment>
<comment type="subunit">
    <text evidence="1">Part of the 30S ribosomal subunit. Forms a loose heterodimer with protein S19. Forms two bridges to the 50S subunit in the 70S ribosome.</text>
</comment>
<comment type="similarity">
    <text evidence="1">Belongs to the universal ribosomal protein uS13 family.</text>
</comment>
<gene>
    <name evidence="1" type="primary">rpsM</name>
    <name type="ordered locus">Krad_0713</name>
</gene>
<name>RS13_KINRD</name>
<dbReference type="EMBL" id="CP000750">
    <property type="protein sequence ID" value="ABS02202.1"/>
    <property type="molecule type" value="Genomic_DNA"/>
</dbReference>
<dbReference type="RefSeq" id="WP_012084953.1">
    <property type="nucleotide sequence ID" value="NC_009664.2"/>
</dbReference>
<dbReference type="SMR" id="A6W5W3"/>
<dbReference type="STRING" id="266940.Krad_0713"/>
<dbReference type="KEGG" id="kra:Krad_0713"/>
<dbReference type="eggNOG" id="COG0099">
    <property type="taxonomic scope" value="Bacteria"/>
</dbReference>
<dbReference type="HOGENOM" id="CLU_103849_1_2_11"/>
<dbReference type="OrthoDB" id="9803610at2"/>
<dbReference type="Proteomes" id="UP000001116">
    <property type="component" value="Chromosome"/>
</dbReference>
<dbReference type="GO" id="GO:0005829">
    <property type="term" value="C:cytosol"/>
    <property type="evidence" value="ECO:0007669"/>
    <property type="project" value="TreeGrafter"/>
</dbReference>
<dbReference type="GO" id="GO:0015935">
    <property type="term" value="C:small ribosomal subunit"/>
    <property type="evidence" value="ECO:0007669"/>
    <property type="project" value="TreeGrafter"/>
</dbReference>
<dbReference type="GO" id="GO:0019843">
    <property type="term" value="F:rRNA binding"/>
    <property type="evidence" value="ECO:0007669"/>
    <property type="project" value="UniProtKB-UniRule"/>
</dbReference>
<dbReference type="GO" id="GO:0003735">
    <property type="term" value="F:structural constituent of ribosome"/>
    <property type="evidence" value="ECO:0007669"/>
    <property type="project" value="InterPro"/>
</dbReference>
<dbReference type="GO" id="GO:0000049">
    <property type="term" value="F:tRNA binding"/>
    <property type="evidence" value="ECO:0007669"/>
    <property type="project" value="UniProtKB-UniRule"/>
</dbReference>
<dbReference type="GO" id="GO:0006412">
    <property type="term" value="P:translation"/>
    <property type="evidence" value="ECO:0007669"/>
    <property type="project" value="UniProtKB-UniRule"/>
</dbReference>
<dbReference type="FunFam" id="1.10.8.50:FF:000001">
    <property type="entry name" value="30S ribosomal protein S13"/>
    <property type="match status" value="1"/>
</dbReference>
<dbReference type="FunFam" id="4.10.910.10:FF:000001">
    <property type="entry name" value="30S ribosomal protein S13"/>
    <property type="match status" value="1"/>
</dbReference>
<dbReference type="Gene3D" id="1.10.8.50">
    <property type="match status" value="1"/>
</dbReference>
<dbReference type="Gene3D" id="4.10.910.10">
    <property type="entry name" value="30s ribosomal protein s13, domain 2"/>
    <property type="match status" value="1"/>
</dbReference>
<dbReference type="HAMAP" id="MF_01315">
    <property type="entry name" value="Ribosomal_uS13"/>
    <property type="match status" value="1"/>
</dbReference>
<dbReference type="InterPro" id="IPR027437">
    <property type="entry name" value="Rbsml_uS13_C"/>
</dbReference>
<dbReference type="InterPro" id="IPR001892">
    <property type="entry name" value="Ribosomal_uS13"/>
</dbReference>
<dbReference type="InterPro" id="IPR010979">
    <property type="entry name" value="Ribosomal_uS13-like_H2TH"/>
</dbReference>
<dbReference type="InterPro" id="IPR019980">
    <property type="entry name" value="Ribosomal_uS13_bac-type"/>
</dbReference>
<dbReference type="InterPro" id="IPR018269">
    <property type="entry name" value="Ribosomal_uS13_CS"/>
</dbReference>
<dbReference type="NCBIfam" id="TIGR03631">
    <property type="entry name" value="uS13_bact"/>
    <property type="match status" value="1"/>
</dbReference>
<dbReference type="PANTHER" id="PTHR10871">
    <property type="entry name" value="30S RIBOSOMAL PROTEIN S13/40S RIBOSOMAL PROTEIN S18"/>
    <property type="match status" value="1"/>
</dbReference>
<dbReference type="PANTHER" id="PTHR10871:SF1">
    <property type="entry name" value="SMALL RIBOSOMAL SUBUNIT PROTEIN US13M"/>
    <property type="match status" value="1"/>
</dbReference>
<dbReference type="Pfam" id="PF00416">
    <property type="entry name" value="Ribosomal_S13"/>
    <property type="match status" value="1"/>
</dbReference>
<dbReference type="PIRSF" id="PIRSF002134">
    <property type="entry name" value="Ribosomal_S13"/>
    <property type="match status" value="1"/>
</dbReference>
<dbReference type="SUPFAM" id="SSF46946">
    <property type="entry name" value="S13-like H2TH domain"/>
    <property type="match status" value="1"/>
</dbReference>
<dbReference type="PROSITE" id="PS00646">
    <property type="entry name" value="RIBOSOMAL_S13_1"/>
    <property type="match status" value="1"/>
</dbReference>
<dbReference type="PROSITE" id="PS50159">
    <property type="entry name" value="RIBOSOMAL_S13_2"/>
    <property type="match status" value="1"/>
</dbReference>
<proteinExistence type="inferred from homology"/>
<evidence type="ECO:0000255" key="1">
    <source>
        <dbReference type="HAMAP-Rule" id="MF_01315"/>
    </source>
</evidence>
<evidence type="ECO:0000256" key="2">
    <source>
        <dbReference type="SAM" id="MobiDB-lite"/>
    </source>
</evidence>
<evidence type="ECO:0000305" key="3"/>
<feature type="chain" id="PRO_1000086243" description="Small ribosomal subunit protein uS13">
    <location>
        <begin position="1"/>
        <end position="126"/>
    </location>
</feature>
<feature type="region of interest" description="Disordered" evidence="2">
    <location>
        <begin position="92"/>
        <end position="126"/>
    </location>
</feature>
<reference key="1">
    <citation type="journal article" date="2008" name="PLoS ONE">
        <title>Survival in nuclear waste, extreme resistance, and potential applications gleaned from the genome sequence of Kineococcus radiotolerans SRS30216.</title>
        <authorList>
            <person name="Bagwell C.E."/>
            <person name="Bhat S."/>
            <person name="Hawkins G.M."/>
            <person name="Smith B.W."/>
            <person name="Biswas T."/>
            <person name="Hoover T.R."/>
            <person name="Saunders E."/>
            <person name="Han C.S."/>
            <person name="Tsodikov O.V."/>
            <person name="Shimkets L.J."/>
        </authorList>
    </citation>
    <scope>NUCLEOTIDE SEQUENCE [LARGE SCALE GENOMIC DNA]</scope>
    <source>
        <strain>ATCC BAA-149 / DSM 14245 / SRS30216</strain>
    </source>
</reference>